<comment type="function">
    <text evidence="1">Protease subunit of a proteasome-like degradation complex believed to be a general protein degrading machinery.</text>
</comment>
<comment type="catalytic activity">
    <reaction evidence="1">
        <text>ATP-dependent cleavage of peptide bonds with broad specificity.</text>
        <dbReference type="EC" id="3.4.25.2"/>
    </reaction>
</comment>
<comment type="activity regulation">
    <text evidence="1">Allosterically activated by HslU binding.</text>
</comment>
<comment type="subunit">
    <text evidence="1">A double ring-shaped homohexamer of HslV is capped on each side by a ring-shaped HslU homohexamer. The assembly of the HslU/HslV complex is dependent on binding of ATP.</text>
</comment>
<comment type="subcellular location">
    <subcellularLocation>
        <location evidence="1">Cytoplasm</location>
    </subcellularLocation>
</comment>
<comment type="similarity">
    <text evidence="1">Belongs to the peptidase T1B family. HslV subfamily.</text>
</comment>
<keyword id="KW-0021">Allosteric enzyme</keyword>
<keyword id="KW-0963">Cytoplasm</keyword>
<keyword id="KW-0378">Hydrolase</keyword>
<keyword id="KW-0479">Metal-binding</keyword>
<keyword id="KW-0645">Protease</keyword>
<keyword id="KW-1185">Reference proteome</keyword>
<keyword id="KW-0915">Sodium</keyword>
<keyword id="KW-0888">Threonine protease</keyword>
<evidence type="ECO:0000255" key="1">
    <source>
        <dbReference type="HAMAP-Rule" id="MF_00248"/>
    </source>
</evidence>
<sequence>MEWKSTTVLVVSRNGKTVMAGDGQVTYGNTVMKHGARKIRKIGDGQVLAGFAGSVADAMALFDRFESKLKEWGGNLTKAAVELAKDWRTDRVLRRLEALLLVADRDNVLIISGTGEVVQPDDNVAAIGSGAPYAIAAARALIRNTDLDAREIVEKSMQIASEICIYTNGNITIEEI</sequence>
<protein>
    <recommendedName>
        <fullName evidence="1">ATP-dependent protease subunit HslV</fullName>
        <ecNumber evidence="1">3.4.25.2</ecNumber>
    </recommendedName>
</protein>
<feature type="chain" id="PRO_0000336801" description="ATP-dependent protease subunit HslV">
    <location>
        <begin position="1"/>
        <end position="176"/>
    </location>
</feature>
<feature type="active site" evidence="1">
    <location>
        <position position="6"/>
    </location>
</feature>
<feature type="binding site" evidence="1">
    <location>
        <position position="161"/>
    </location>
    <ligand>
        <name>Na(+)</name>
        <dbReference type="ChEBI" id="CHEBI:29101"/>
    </ligand>
</feature>
<feature type="binding site" evidence="1">
    <location>
        <position position="164"/>
    </location>
    <ligand>
        <name>Na(+)</name>
        <dbReference type="ChEBI" id="CHEBI:29101"/>
    </ligand>
</feature>
<feature type="binding site" evidence="1">
    <location>
        <position position="167"/>
    </location>
    <ligand>
        <name>Na(+)</name>
        <dbReference type="ChEBI" id="CHEBI:29101"/>
    </ligand>
</feature>
<reference key="1">
    <citation type="submission" date="2007-08" db="EMBL/GenBank/DDBJ databases">
        <title>Complete sequence of Thermotoga lettingae TMO.</title>
        <authorList>
            <consortium name="US DOE Joint Genome Institute"/>
            <person name="Copeland A."/>
            <person name="Lucas S."/>
            <person name="Lapidus A."/>
            <person name="Barry K."/>
            <person name="Glavina del Rio T."/>
            <person name="Dalin E."/>
            <person name="Tice H."/>
            <person name="Pitluck S."/>
            <person name="Foster B."/>
            <person name="Bruce D."/>
            <person name="Schmutz J."/>
            <person name="Larimer F."/>
            <person name="Land M."/>
            <person name="Hauser L."/>
            <person name="Kyrpides N."/>
            <person name="Mikhailova N."/>
            <person name="Nelson K."/>
            <person name="Gogarten J.P."/>
            <person name="Noll K."/>
            <person name="Richardson P."/>
        </authorList>
    </citation>
    <scope>NUCLEOTIDE SEQUENCE [LARGE SCALE GENOMIC DNA]</scope>
    <source>
        <strain>ATCC BAA-301 / DSM 14385 / NBRC 107922 / TMO</strain>
    </source>
</reference>
<name>HSLV_PSELT</name>
<organism>
    <name type="scientific">Pseudothermotoga lettingae (strain ATCC BAA-301 / DSM 14385 / NBRC 107922 / TMO)</name>
    <name type="common">Thermotoga lettingae</name>
    <dbReference type="NCBI Taxonomy" id="416591"/>
    <lineage>
        <taxon>Bacteria</taxon>
        <taxon>Thermotogati</taxon>
        <taxon>Thermotogota</taxon>
        <taxon>Thermotogae</taxon>
        <taxon>Thermotogales</taxon>
        <taxon>Thermotogaceae</taxon>
        <taxon>Pseudothermotoga</taxon>
    </lineage>
</organism>
<dbReference type="EC" id="3.4.25.2" evidence="1"/>
<dbReference type="EMBL" id="CP000812">
    <property type="protein sequence ID" value="ABV33341.1"/>
    <property type="molecule type" value="Genomic_DNA"/>
</dbReference>
<dbReference type="RefSeq" id="WP_012002822.1">
    <property type="nucleotide sequence ID" value="NZ_BSDV01000001.1"/>
</dbReference>
<dbReference type="SMR" id="A8F5A7"/>
<dbReference type="STRING" id="416591.Tlet_0775"/>
<dbReference type="MEROPS" id="T01.006"/>
<dbReference type="KEGG" id="tle:Tlet_0775"/>
<dbReference type="eggNOG" id="COG5405">
    <property type="taxonomic scope" value="Bacteria"/>
</dbReference>
<dbReference type="HOGENOM" id="CLU_093872_1_0_0"/>
<dbReference type="OrthoDB" id="9804884at2"/>
<dbReference type="Proteomes" id="UP000002016">
    <property type="component" value="Chromosome"/>
</dbReference>
<dbReference type="GO" id="GO:0009376">
    <property type="term" value="C:HslUV protease complex"/>
    <property type="evidence" value="ECO:0007669"/>
    <property type="project" value="UniProtKB-UniRule"/>
</dbReference>
<dbReference type="GO" id="GO:0005839">
    <property type="term" value="C:proteasome core complex"/>
    <property type="evidence" value="ECO:0007669"/>
    <property type="project" value="InterPro"/>
</dbReference>
<dbReference type="GO" id="GO:0046872">
    <property type="term" value="F:metal ion binding"/>
    <property type="evidence" value="ECO:0007669"/>
    <property type="project" value="UniProtKB-KW"/>
</dbReference>
<dbReference type="GO" id="GO:0004298">
    <property type="term" value="F:threonine-type endopeptidase activity"/>
    <property type="evidence" value="ECO:0007669"/>
    <property type="project" value="UniProtKB-KW"/>
</dbReference>
<dbReference type="GO" id="GO:0051603">
    <property type="term" value="P:proteolysis involved in protein catabolic process"/>
    <property type="evidence" value="ECO:0007669"/>
    <property type="project" value="InterPro"/>
</dbReference>
<dbReference type="CDD" id="cd01913">
    <property type="entry name" value="protease_HslV"/>
    <property type="match status" value="1"/>
</dbReference>
<dbReference type="FunFam" id="3.60.20.10:FF:000002">
    <property type="entry name" value="ATP-dependent protease subunit HslV"/>
    <property type="match status" value="1"/>
</dbReference>
<dbReference type="Gene3D" id="3.60.20.10">
    <property type="entry name" value="Glutamine Phosphoribosylpyrophosphate, subunit 1, domain 1"/>
    <property type="match status" value="1"/>
</dbReference>
<dbReference type="HAMAP" id="MF_00248">
    <property type="entry name" value="HslV"/>
    <property type="match status" value="1"/>
</dbReference>
<dbReference type="InterPro" id="IPR022281">
    <property type="entry name" value="ATP-dep_Prtase_HsIV_su"/>
</dbReference>
<dbReference type="InterPro" id="IPR029055">
    <property type="entry name" value="Ntn_hydrolases_N"/>
</dbReference>
<dbReference type="InterPro" id="IPR001353">
    <property type="entry name" value="Proteasome_sua/b"/>
</dbReference>
<dbReference type="InterPro" id="IPR023333">
    <property type="entry name" value="Proteasome_suB-type"/>
</dbReference>
<dbReference type="NCBIfam" id="TIGR03692">
    <property type="entry name" value="ATP_dep_HslV"/>
    <property type="match status" value="1"/>
</dbReference>
<dbReference type="NCBIfam" id="NF003964">
    <property type="entry name" value="PRK05456.1"/>
    <property type="match status" value="1"/>
</dbReference>
<dbReference type="PANTHER" id="PTHR32194:SF0">
    <property type="entry name" value="ATP-DEPENDENT PROTEASE SUBUNIT HSLV"/>
    <property type="match status" value="1"/>
</dbReference>
<dbReference type="PANTHER" id="PTHR32194">
    <property type="entry name" value="METALLOPROTEASE TLDD"/>
    <property type="match status" value="1"/>
</dbReference>
<dbReference type="Pfam" id="PF00227">
    <property type="entry name" value="Proteasome"/>
    <property type="match status" value="1"/>
</dbReference>
<dbReference type="PIRSF" id="PIRSF039093">
    <property type="entry name" value="HslV"/>
    <property type="match status" value="1"/>
</dbReference>
<dbReference type="SUPFAM" id="SSF56235">
    <property type="entry name" value="N-terminal nucleophile aminohydrolases (Ntn hydrolases)"/>
    <property type="match status" value="1"/>
</dbReference>
<dbReference type="PROSITE" id="PS51476">
    <property type="entry name" value="PROTEASOME_BETA_2"/>
    <property type="match status" value="1"/>
</dbReference>
<gene>
    <name evidence="1" type="primary">hslV</name>
    <name type="ordered locus">Tlet_0775</name>
</gene>
<accession>A8F5A7</accession>
<proteinExistence type="inferred from homology"/>